<name>NCAP_CPSVP</name>
<proteinExistence type="inferred from homology"/>
<dbReference type="EMBL" id="AY654894">
    <property type="protein sequence ID" value="AAT72910.1"/>
    <property type="molecule type" value="Genomic_DNA"/>
</dbReference>
<dbReference type="SMR" id="Q6DN64"/>
<dbReference type="KEGG" id="vg:3077257"/>
<dbReference type="Proteomes" id="UP000009269">
    <property type="component" value="Genome"/>
</dbReference>
<dbReference type="GO" id="GO:0019029">
    <property type="term" value="C:helical viral capsid"/>
    <property type="evidence" value="ECO:0007669"/>
    <property type="project" value="UniProtKB-KW"/>
</dbReference>
<dbReference type="GO" id="GO:0030430">
    <property type="term" value="C:host cell cytoplasm"/>
    <property type="evidence" value="ECO:0007669"/>
    <property type="project" value="UniProtKB-SubCell"/>
</dbReference>
<dbReference type="GO" id="GO:1990904">
    <property type="term" value="C:ribonucleoprotein complex"/>
    <property type="evidence" value="ECO:0007669"/>
    <property type="project" value="UniProtKB-KW"/>
</dbReference>
<dbReference type="GO" id="GO:0019013">
    <property type="term" value="C:viral nucleocapsid"/>
    <property type="evidence" value="ECO:0007669"/>
    <property type="project" value="UniProtKB-KW"/>
</dbReference>
<dbReference type="GO" id="GO:0003723">
    <property type="term" value="F:RNA binding"/>
    <property type="evidence" value="ECO:0007669"/>
    <property type="project" value="UniProtKB-KW"/>
</dbReference>
<dbReference type="InterPro" id="IPR021310">
    <property type="entry name" value="Nucleocap_ssRNA"/>
</dbReference>
<dbReference type="Pfam" id="PF11128">
    <property type="entry name" value="Nucleocap_ssRNA"/>
    <property type="match status" value="1"/>
</dbReference>
<feature type="chain" id="PRO_0000391480" description="Nucleoprotein">
    <location>
        <begin position="1"/>
        <end position="439"/>
    </location>
</feature>
<evidence type="ECO:0000250" key="1"/>
<evidence type="ECO:0000305" key="2"/>
<comment type="function">
    <text>Encapsidates the genome, protecting it from nucleases. The encapsidated genomic RNA is termed the nucleocapsid (NC) and serves as template for viral transcription and replication.</text>
</comment>
<comment type="subunit">
    <text evidence="1">Homomultimerizes to form the nucleocapsid. Binds to viral genomic RNA (By similarity).</text>
</comment>
<comment type="subcellular location">
    <subcellularLocation>
        <location>Virion</location>
    </subcellularLocation>
    <subcellularLocation>
        <location evidence="1">Host cytoplasm</location>
    </subcellularLocation>
</comment>
<comment type="similarity">
    <text evidence="2">Belongs to the ophiovirus nucleocapsid family.</text>
</comment>
<organism>
    <name type="scientific">Citrus psorosis virus (isolate Spain/P-121)</name>
    <name type="common">CPsV</name>
    <name type="synonym">Citrus ringspot virus</name>
    <dbReference type="NCBI Taxonomy" id="652963"/>
    <lineage>
        <taxon>Viruses</taxon>
        <taxon>Riboviria</taxon>
        <taxon>Orthornavirae</taxon>
        <taxon>Negarnaviricota</taxon>
        <taxon>Haploviricotina</taxon>
        <taxon>Milneviricetes</taxon>
        <taxon>Serpentovirales</taxon>
        <taxon>Aspiviridae</taxon>
        <taxon>Ophiovirus</taxon>
        <taxon>Ophiovirus citri</taxon>
    </lineage>
</organism>
<keyword id="KW-0167">Capsid protein</keyword>
<keyword id="KW-1139">Helical capsid protein</keyword>
<keyword id="KW-1035">Host cytoplasm</keyword>
<keyword id="KW-1185">Reference proteome</keyword>
<keyword id="KW-0687">Ribonucleoprotein</keyword>
<keyword id="KW-0694">RNA-binding</keyword>
<keyword id="KW-0543">Viral nucleoprotein</keyword>
<keyword id="KW-0946">Virion</keyword>
<organismHost>
    <name type="scientific">Citrus aurantiifolia</name>
    <name type="common">Key lime</name>
    <name type="synonym">Limonia aurantifolia</name>
    <dbReference type="NCBI Taxonomy" id="159033"/>
</organismHost>
<organismHost>
    <name type="scientific">Citrus limon</name>
    <name type="common">Lemon</name>
    <name type="synonym">Citrus medica var. limon</name>
    <dbReference type="NCBI Taxonomy" id="2708"/>
</organismHost>
<organismHost>
    <name type="scientific">Citrus paradisi</name>
    <name type="common">Grapefruit</name>
    <dbReference type="NCBI Taxonomy" id="37656"/>
</organismHost>
<reference key="1">
    <citation type="journal article" date="2005" name="Arch. Virol.">
        <title>The complete nucleotide sequence of a Spanish isolate of Citrus psorosis virus: comparative analysis with other ophioviruses.</title>
        <authorList>
            <person name="Martin S."/>
            <person name="Lopez C."/>
            <person name="Garcia M.L."/>
            <person name="Naum-Ongania G."/>
            <person name="Grau O."/>
            <person name="Flores R."/>
            <person name="Moreno P."/>
            <person name="Guerri J."/>
        </authorList>
    </citation>
    <scope>NUCLEOTIDE SEQUENCE [GENOMIC RNA]</scope>
</reference>
<sequence length="439" mass="48756">MSIPIKVSQLIDAKTKWESEKEKSPAEILTLLKTYGVLRDTGALSSKSTAFLSGLSKDKRVILTDEGLAEFKSVENPHDQGEKPAFTLASSSSIKITNIEVIKQKMEQETFQIDQLKLKEQIENFIKTVTLDDESYTEGEIIIKHFGNPDAELNMLITAGTKILDGLVYVSMKGDTKSLNLFKMEQVDGVCDSDIIKNIRVAKRAIQAAFVLIFTQGSLPGKADDKRKVPEFVKSKLYDGDVSLSQISEELSHAPTKKFPARVFLKIDIDNLPSAVCSRCKLNIAGNRSVRYAGFASSFQTKQKLSPAVGATPESLMPLLETNQKIEKSIAIRDFLKTMEGQWKNQKRLHPLSDEKPTIKNFTLKLTCAIIYSLTPDGRIDMAERIITDKNKGFQNDRNFFGDGEGPTRTWSVLTKPEADFSNITVDGLKGIFGVASTM</sequence>
<accession>Q6DN64</accession>
<protein>
    <recommendedName>
        <fullName>Nucleoprotein</fullName>
        <shortName>NP</shortName>
    </recommendedName>
    <alternativeName>
        <fullName>Nucleocapsid protein</fullName>
        <shortName>Protein N</shortName>
    </alternativeName>
</protein>
<gene>
    <name type="primary">N</name>
</gene>